<sequence length="453" mass="51829">MQEWLEILLIHTLIDSSSLSPQRLRVMNRIISSQGSDLIKQKLSQHTSFFGIKLWILITASASIAFLLVLIISVLLCFIFHRRRCSQEPFRLRSKLCLPLSHIPLTNKQQIPYNRCGDDIESQRISQVGWSSARLSYYTRSFSSTGSFGSFNVFTFMEIKNVTDSFADDNVITKGDSSTVYRGILMGTVTVAVKRFLPSNSRYEDKDFITKAEMIANVRHKNVVRLLGYCIEGDERVLVYEYAEKGDLHEWLHGSAGRNRPLTWRKRMKIIQGVAKGLAYIHEDIEPKITHQDIRPSKILLDYQWNPKILDVGFIGHSDIPTLIPSPGNMDEKIDVYSFGNMIMELVSGRVSVDQSSPHVRVYLVDWIKEMVANHMIVDVLDPSLPEFPTIKELKRIVLISLRCVDPELKERPKMGDVIHMLQPHDLLLNNNAIQKAQKITRSHEVSAISIRQ</sequence>
<comment type="catalytic activity">
    <reaction>
        <text>L-seryl-[protein] + ATP = O-phospho-L-seryl-[protein] + ADP + H(+)</text>
        <dbReference type="Rhea" id="RHEA:17989"/>
        <dbReference type="Rhea" id="RHEA-COMP:9863"/>
        <dbReference type="Rhea" id="RHEA-COMP:11604"/>
        <dbReference type="ChEBI" id="CHEBI:15378"/>
        <dbReference type="ChEBI" id="CHEBI:29999"/>
        <dbReference type="ChEBI" id="CHEBI:30616"/>
        <dbReference type="ChEBI" id="CHEBI:83421"/>
        <dbReference type="ChEBI" id="CHEBI:456216"/>
        <dbReference type="EC" id="2.7.11.1"/>
    </reaction>
</comment>
<comment type="catalytic activity">
    <reaction>
        <text>L-threonyl-[protein] + ATP = O-phospho-L-threonyl-[protein] + ADP + H(+)</text>
        <dbReference type="Rhea" id="RHEA:46608"/>
        <dbReference type="Rhea" id="RHEA-COMP:11060"/>
        <dbReference type="Rhea" id="RHEA-COMP:11605"/>
        <dbReference type="ChEBI" id="CHEBI:15378"/>
        <dbReference type="ChEBI" id="CHEBI:30013"/>
        <dbReference type="ChEBI" id="CHEBI:30616"/>
        <dbReference type="ChEBI" id="CHEBI:61977"/>
        <dbReference type="ChEBI" id="CHEBI:456216"/>
        <dbReference type="EC" id="2.7.11.1"/>
    </reaction>
</comment>
<comment type="subcellular location">
    <subcellularLocation>
        <location evidence="1">Cell membrane</location>
        <topology evidence="1">Single-pass membrane protein</topology>
    </subcellularLocation>
</comment>
<comment type="alternative products">
    <event type="alternative splicing"/>
    <isoform>
        <id>Q3EBR4-1</id>
        <name>1</name>
        <sequence type="displayed"/>
    </isoform>
    <isoform>
        <id>Q3EBR4-2</id>
        <name>2</name>
        <sequence type="described" ref="VSP_040169"/>
    </isoform>
</comment>
<comment type="similarity">
    <text evidence="5">Belongs to the protein kinase superfamily.</text>
</comment>
<comment type="sequence caution" evidence="5">
    <conflict type="erroneous gene model prediction">
        <sequence resource="EMBL-CDS" id="AAC20728"/>
    </conflict>
</comment>
<accession>Q3EBR4</accession>
<accession>O80859</accession>
<reference key="1">
    <citation type="journal article" date="1999" name="Nature">
        <title>Sequence and analysis of chromosome 2 of the plant Arabidopsis thaliana.</title>
        <authorList>
            <person name="Lin X."/>
            <person name="Kaul S."/>
            <person name="Rounsley S.D."/>
            <person name="Shea T.P."/>
            <person name="Benito M.-I."/>
            <person name="Town C.D."/>
            <person name="Fujii C.Y."/>
            <person name="Mason T.M."/>
            <person name="Bowman C.L."/>
            <person name="Barnstead M.E."/>
            <person name="Feldblyum T.V."/>
            <person name="Buell C.R."/>
            <person name="Ketchum K.A."/>
            <person name="Lee J.J."/>
            <person name="Ronning C.M."/>
            <person name="Koo H.L."/>
            <person name="Moffat K.S."/>
            <person name="Cronin L.A."/>
            <person name="Shen M."/>
            <person name="Pai G."/>
            <person name="Van Aken S."/>
            <person name="Umayam L."/>
            <person name="Tallon L.J."/>
            <person name="Gill J.E."/>
            <person name="Adams M.D."/>
            <person name="Carrera A.J."/>
            <person name="Creasy T.H."/>
            <person name="Goodman H.M."/>
            <person name="Somerville C.R."/>
            <person name="Copenhaver G.P."/>
            <person name="Preuss D."/>
            <person name="Nierman W.C."/>
            <person name="White O."/>
            <person name="Eisen J.A."/>
            <person name="Salzberg S.L."/>
            <person name="Fraser C.M."/>
            <person name="Venter J.C."/>
        </authorList>
    </citation>
    <scope>NUCLEOTIDE SEQUENCE [LARGE SCALE GENOMIC DNA]</scope>
    <source>
        <strain>cv. Columbia</strain>
    </source>
</reference>
<reference key="2">
    <citation type="journal article" date="2017" name="Plant J.">
        <title>Araport11: a complete reannotation of the Arabidopsis thaliana reference genome.</title>
        <authorList>
            <person name="Cheng C.Y."/>
            <person name="Krishnakumar V."/>
            <person name="Chan A.P."/>
            <person name="Thibaud-Nissen F."/>
            <person name="Schobel S."/>
            <person name="Town C.D."/>
        </authorList>
    </citation>
    <scope>GENOME REANNOTATION</scope>
    <source>
        <strain>cv. Columbia</strain>
    </source>
</reference>
<proteinExistence type="inferred from homology"/>
<evidence type="ECO:0000250" key="1"/>
<evidence type="ECO:0000250" key="2">
    <source>
        <dbReference type="UniProtKB" id="O48814"/>
    </source>
</evidence>
<evidence type="ECO:0000255" key="3"/>
<evidence type="ECO:0000255" key="4">
    <source>
        <dbReference type="PROSITE-ProRule" id="PRU00159"/>
    </source>
</evidence>
<evidence type="ECO:0000305" key="5"/>
<feature type="chain" id="PRO_0000401354" description="Putative receptor-like protein kinase At2g30940">
    <location>
        <begin position="1"/>
        <end position="453"/>
    </location>
</feature>
<feature type="transmembrane region" description="Helical" evidence="3">
    <location>
        <begin position="60"/>
        <end position="80"/>
    </location>
</feature>
<feature type="domain" description="Protein kinase" evidence="4">
    <location>
        <begin position="166"/>
        <end position="428"/>
    </location>
</feature>
<feature type="active site" description="Proton acceptor" evidence="4">
    <location>
        <position position="293"/>
    </location>
</feature>
<feature type="binding site" evidence="4">
    <location>
        <begin position="172"/>
        <end position="180"/>
    </location>
    <ligand>
        <name>ATP</name>
        <dbReference type="ChEBI" id="CHEBI:30616"/>
    </ligand>
</feature>
<feature type="binding site" evidence="4">
    <location>
        <position position="194"/>
    </location>
    <ligand>
        <name>ATP</name>
        <dbReference type="ChEBI" id="CHEBI:30616"/>
    </ligand>
</feature>
<feature type="modified residue" description="Phosphothreonine" evidence="2">
    <location>
        <position position="155"/>
    </location>
</feature>
<feature type="modified residue" description="Phosphotyrosine" evidence="2">
    <location>
        <position position="240"/>
    </location>
</feature>
<feature type="modified residue" description="Phosphoserine" evidence="2">
    <location>
        <position position="297"/>
    </location>
</feature>
<feature type="modified residue" description="Phosphothreonine" evidence="2">
    <location>
        <position position="322"/>
    </location>
</feature>
<feature type="splice variant" id="VSP_040169" description="In isoform 2." evidence="5">
    <location>
        <begin position="360"/>
        <end position="361"/>
    </location>
</feature>
<dbReference type="EC" id="2.7.11.1"/>
<dbReference type="EMBL" id="AC004669">
    <property type="protein sequence ID" value="AAC20728.1"/>
    <property type="status" value="ALT_SEQ"/>
    <property type="molecule type" value="Genomic_DNA"/>
</dbReference>
<dbReference type="EMBL" id="CP002685">
    <property type="protein sequence ID" value="AEC08463.1"/>
    <property type="molecule type" value="Genomic_DNA"/>
</dbReference>
<dbReference type="EMBL" id="CP002685">
    <property type="protein sequence ID" value="AEC08464.1"/>
    <property type="molecule type" value="Genomic_DNA"/>
</dbReference>
<dbReference type="PIR" id="E84714">
    <property type="entry name" value="E84714"/>
</dbReference>
<dbReference type="RefSeq" id="NP_180651.2">
    <molecule id="Q3EBR4-2"/>
    <property type="nucleotide sequence ID" value="NM_128647.2"/>
</dbReference>
<dbReference type="RefSeq" id="NP_973571.2">
    <molecule id="Q3EBR4-1"/>
    <property type="nucleotide sequence ID" value="NM_201842.2"/>
</dbReference>
<dbReference type="SMR" id="Q3EBR4"/>
<dbReference type="FunCoup" id="Q3EBR4">
    <property type="interactions" value="25"/>
</dbReference>
<dbReference type="STRING" id="3702.Q3EBR4"/>
<dbReference type="iPTMnet" id="Q3EBR4"/>
<dbReference type="PaxDb" id="3702-AT2G30940.2"/>
<dbReference type="ProteomicsDB" id="243121">
    <molecule id="Q3EBR4-1"/>
</dbReference>
<dbReference type="EnsemblPlants" id="AT2G30940.1">
    <molecule id="Q3EBR4-2"/>
    <property type="protein sequence ID" value="AT2G30940.1"/>
    <property type="gene ID" value="AT2G30940"/>
</dbReference>
<dbReference type="EnsemblPlants" id="AT2G30940.2">
    <molecule id="Q3EBR4-1"/>
    <property type="protein sequence ID" value="AT2G30940.2"/>
    <property type="gene ID" value="AT2G30940"/>
</dbReference>
<dbReference type="GeneID" id="817645"/>
<dbReference type="Gramene" id="AT2G30940.1">
    <molecule id="Q3EBR4-2"/>
    <property type="protein sequence ID" value="AT2G30940.1"/>
    <property type="gene ID" value="AT2G30940"/>
</dbReference>
<dbReference type="Gramene" id="AT2G30940.2">
    <molecule id="Q3EBR4-1"/>
    <property type="protein sequence ID" value="AT2G30940.2"/>
    <property type="gene ID" value="AT2G30940"/>
</dbReference>
<dbReference type="KEGG" id="ath:AT2G30940"/>
<dbReference type="Araport" id="AT2G30940"/>
<dbReference type="TAIR" id="AT2G30940"/>
<dbReference type="eggNOG" id="KOG1187">
    <property type="taxonomic scope" value="Eukaryota"/>
</dbReference>
<dbReference type="InParanoid" id="Q3EBR4"/>
<dbReference type="OMA" id="RITHQYV"/>
<dbReference type="PhylomeDB" id="Q3EBR4"/>
<dbReference type="PRO" id="PR:Q3EBR4"/>
<dbReference type="Proteomes" id="UP000006548">
    <property type="component" value="Chromosome 2"/>
</dbReference>
<dbReference type="ExpressionAtlas" id="Q3EBR4">
    <property type="expression patterns" value="baseline and differential"/>
</dbReference>
<dbReference type="GO" id="GO:0005886">
    <property type="term" value="C:plasma membrane"/>
    <property type="evidence" value="ECO:0007669"/>
    <property type="project" value="UniProtKB-SubCell"/>
</dbReference>
<dbReference type="GO" id="GO:0005524">
    <property type="term" value="F:ATP binding"/>
    <property type="evidence" value="ECO:0007669"/>
    <property type="project" value="UniProtKB-KW"/>
</dbReference>
<dbReference type="GO" id="GO:0106310">
    <property type="term" value="F:protein serine kinase activity"/>
    <property type="evidence" value="ECO:0007669"/>
    <property type="project" value="RHEA"/>
</dbReference>
<dbReference type="GO" id="GO:0004674">
    <property type="term" value="F:protein serine/threonine kinase activity"/>
    <property type="evidence" value="ECO:0007669"/>
    <property type="project" value="UniProtKB-KW"/>
</dbReference>
<dbReference type="FunFam" id="3.30.200.20:FF:001664">
    <property type="entry name" value="Putative receptor-like protein kinase At2g30940"/>
    <property type="match status" value="1"/>
</dbReference>
<dbReference type="Gene3D" id="3.30.200.20">
    <property type="entry name" value="Phosphorylase Kinase, domain 1"/>
    <property type="match status" value="1"/>
</dbReference>
<dbReference type="Gene3D" id="1.10.510.10">
    <property type="entry name" value="Transferase(Phosphotransferase) domain 1"/>
    <property type="match status" value="1"/>
</dbReference>
<dbReference type="InterPro" id="IPR011009">
    <property type="entry name" value="Kinase-like_dom_sf"/>
</dbReference>
<dbReference type="InterPro" id="IPR000719">
    <property type="entry name" value="Prot_kinase_dom"/>
</dbReference>
<dbReference type="InterPro" id="IPR052232">
    <property type="entry name" value="RLK_Ser/Thr-Kinase"/>
</dbReference>
<dbReference type="InterPro" id="IPR001245">
    <property type="entry name" value="Ser-Thr/Tyr_kinase_cat_dom"/>
</dbReference>
<dbReference type="PANTHER" id="PTHR47984">
    <property type="entry name" value="OS01G0323000 PROTEIN"/>
    <property type="match status" value="1"/>
</dbReference>
<dbReference type="PANTHER" id="PTHR47984:SF15">
    <property type="entry name" value="PROTEIN KINASE DOMAIN-CONTAINING PROTEIN"/>
    <property type="match status" value="1"/>
</dbReference>
<dbReference type="Pfam" id="PF07714">
    <property type="entry name" value="PK_Tyr_Ser-Thr"/>
    <property type="match status" value="1"/>
</dbReference>
<dbReference type="SUPFAM" id="SSF56112">
    <property type="entry name" value="Protein kinase-like (PK-like)"/>
    <property type="match status" value="1"/>
</dbReference>
<dbReference type="PROSITE" id="PS50011">
    <property type="entry name" value="PROTEIN_KINASE_DOM"/>
    <property type="match status" value="1"/>
</dbReference>
<protein>
    <recommendedName>
        <fullName>Putative receptor-like protein kinase At2g30940</fullName>
        <ecNumber>2.7.11.1</ecNumber>
    </recommendedName>
</protein>
<name>Y2394_ARATH</name>
<organism>
    <name type="scientific">Arabidopsis thaliana</name>
    <name type="common">Mouse-ear cress</name>
    <dbReference type="NCBI Taxonomy" id="3702"/>
    <lineage>
        <taxon>Eukaryota</taxon>
        <taxon>Viridiplantae</taxon>
        <taxon>Streptophyta</taxon>
        <taxon>Embryophyta</taxon>
        <taxon>Tracheophyta</taxon>
        <taxon>Spermatophyta</taxon>
        <taxon>Magnoliopsida</taxon>
        <taxon>eudicotyledons</taxon>
        <taxon>Gunneridae</taxon>
        <taxon>Pentapetalae</taxon>
        <taxon>rosids</taxon>
        <taxon>malvids</taxon>
        <taxon>Brassicales</taxon>
        <taxon>Brassicaceae</taxon>
        <taxon>Camelineae</taxon>
        <taxon>Arabidopsis</taxon>
    </lineage>
</organism>
<keyword id="KW-0025">Alternative splicing</keyword>
<keyword id="KW-0067">ATP-binding</keyword>
<keyword id="KW-1003">Cell membrane</keyword>
<keyword id="KW-0418">Kinase</keyword>
<keyword id="KW-0472">Membrane</keyword>
<keyword id="KW-0547">Nucleotide-binding</keyword>
<keyword id="KW-0597">Phosphoprotein</keyword>
<keyword id="KW-1185">Reference proteome</keyword>
<keyword id="KW-0723">Serine/threonine-protein kinase</keyword>
<keyword id="KW-0808">Transferase</keyword>
<keyword id="KW-0812">Transmembrane</keyword>
<keyword id="KW-1133">Transmembrane helix</keyword>
<gene>
    <name type="ordered locus">At2g30940</name>
    <name type="ORF">F7F1.15</name>
</gene>